<dbReference type="EC" id="2.8.1.8" evidence="1"/>
<dbReference type="EMBL" id="BA000030">
    <property type="protein sequence ID" value="BAC73721.1"/>
    <property type="molecule type" value="Genomic_DNA"/>
</dbReference>
<dbReference type="RefSeq" id="WP_010987411.1">
    <property type="nucleotide sequence ID" value="NZ_JZJK01000089.1"/>
</dbReference>
<dbReference type="SMR" id="Q82AP7"/>
<dbReference type="GeneID" id="41543088"/>
<dbReference type="KEGG" id="sma:SAVERM_6009"/>
<dbReference type="eggNOG" id="COG0320">
    <property type="taxonomic scope" value="Bacteria"/>
</dbReference>
<dbReference type="HOGENOM" id="CLU_033144_2_1_11"/>
<dbReference type="OrthoDB" id="9787898at2"/>
<dbReference type="UniPathway" id="UPA00538">
    <property type="reaction ID" value="UER00593"/>
</dbReference>
<dbReference type="Proteomes" id="UP000000428">
    <property type="component" value="Chromosome"/>
</dbReference>
<dbReference type="GO" id="GO:0005737">
    <property type="term" value="C:cytoplasm"/>
    <property type="evidence" value="ECO:0007669"/>
    <property type="project" value="UniProtKB-SubCell"/>
</dbReference>
<dbReference type="GO" id="GO:0051539">
    <property type="term" value="F:4 iron, 4 sulfur cluster binding"/>
    <property type="evidence" value="ECO:0007669"/>
    <property type="project" value="UniProtKB-UniRule"/>
</dbReference>
<dbReference type="GO" id="GO:0016992">
    <property type="term" value="F:lipoate synthase activity"/>
    <property type="evidence" value="ECO:0007669"/>
    <property type="project" value="UniProtKB-UniRule"/>
</dbReference>
<dbReference type="GO" id="GO:0046872">
    <property type="term" value="F:metal ion binding"/>
    <property type="evidence" value="ECO:0007669"/>
    <property type="project" value="UniProtKB-KW"/>
</dbReference>
<dbReference type="CDD" id="cd01335">
    <property type="entry name" value="Radical_SAM"/>
    <property type="match status" value="1"/>
</dbReference>
<dbReference type="FunFam" id="3.20.20.70:FF:000116">
    <property type="entry name" value="Lipoyl synthase"/>
    <property type="match status" value="1"/>
</dbReference>
<dbReference type="Gene3D" id="3.20.20.70">
    <property type="entry name" value="Aldolase class I"/>
    <property type="match status" value="1"/>
</dbReference>
<dbReference type="HAMAP" id="MF_00206">
    <property type="entry name" value="Lipoyl_synth"/>
    <property type="match status" value="1"/>
</dbReference>
<dbReference type="InterPro" id="IPR013785">
    <property type="entry name" value="Aldolase_TIM"/>
</dbReference>
<dbReference type="InterPro" id="IPR006638">
    <property type="entry name" value="Elp3/MiaA/NifB-like_rSAM"/>
</dbReference>
<dbReference type="InterPro" id="IPR031691">
    <property type="entry name" value="LIAS_N"/>
</dbReference>
<dbReference type="InterPro" id="IPR003698">
    <property type="entry name" value="Lipoyl_synth"/>
</dbReference>
<dbReference type="InterPro" id="IPR007197">
    <property type="entry name" value="rSAM"/>
</dbReference>
<dbReference type="NCBIfam" id="TIGR00510">
    <property type="entry name" value="lipA"/>
    <property type="match status" value="1"/>
</dbReference>
<dbReference type="NCBIfam" id="NF004019">
    <property type="entry name" value="PRK05481.1"/>
    <property type="match status" value="1"/>
</dbReference>
<dbReference type="NCBIfam" id="NF009544">
    <property type="entry name" value="PRK12928.1"/>
    <property type="match status" value="1"/>
</dbReference>
<dbReference type="PANTHER" id="PTHR10949">
    <property type="entry name" value="LIPOYL SYNTHASE"/>
    <property type="match status" value="1"/>
</dbReference>
<dbReference type="PANTHER" id="PTHR10949:SF0">
    <property type="entry name" value="LIPOYL SYNTHASE, MITOCHONDRIAL"/>
    <property type="match status" value="1"/>
</dbReference>
<dbReference type="Pfam" id="PF16881">
    <property type="entry name" value="LIAS_N"/>
    <property type="match status" value="1"/>
</dbReference>
<dbReference type="Pfam" id="PF04055">
    <property type="entry name" value="Radical_SAM"/>
    <property type="match status" value="1"/>
</dbReference>
<dbReference type="PIRSF" id="PIRSF005963">
    <property type="entry name" value="Lipoyl_synth"/>
    <property type="match status" value="1"/>
</dbReference>
<dbReference type="SFLD" id="SFLDF00271">
    <property type="entry name" value="lipoyl_synthase"/>
    <property type="match status" value="1"/>
</dbReference>
<dbReference type="SFLD" id="SFLDS00029">
    <property type="entry name" value="Radical_SAM"/>
    <property type="match status" value="1"/>
</dbReference>
<dbReference type="SMART" id="SM00729">
    <property type="entry name" value="Elp3"/>
    <property type="match status" value="1"/>
</dbReference>
<dbReference type="SUPFAM" id="SSF102114">
    <property type="entry name" value="Radical SAM enzymes"/>
    <property type="match status" value="1"/>
</dbReference>
<dbReference type="PROSITE" id="PS51918">
    <property type="entry name" value="RADICAL_SAM"/>
    <property type="match status" value="1"/>
</dbReference>
<organism>
    <name type="scientific">Streptomyces avermitilis (strain ATCC 31267 / DSM 46492 / JCM 5070 / NBRC 14893 / NCIMB 12804 / NRRL 8165 / MA-4680)</name>
    <dbReference type="NCBI Taxonomy" id="227882"/>
    <lineage>
        <taxon>Bacteria</taxon>
        <taxon>Bacillati</taxon>
        <taxon>Actinomycetota</taxon>
        <taxon>Actinomycetes</taxon>
        <taxon>Kitasatosporales</taxon>
        <taxon>Streptomycetaceae</taxon>
        <taxon>Streptomyces</taxon>
    </lineage>
</organism>
<accession>Q82AP7</accession>
<evidence type="ECO:0000255" key="1">
    <source>
        <dbReference type="HAMAP-Rule" id="MF_00206"/>
    </source>
</evidence>
<evidence type="ECO:0000255" key="2">
    <source>
        <dbReference type="PROSITE-ProRule" id="PRU01266"/>
    </source>
</evidence>
<comment type="function">
    <text evidence="1">Catalyzes the radical-mediated insertion of two sulfur atoms into the C-6 and C-8 positions of the octanoyl moiety bound to the lipoyl domains of lipoate-dependent enzymes, thereby converting the octanoylated domains into lipoylated derivatives.</text>
</comment>
<comment type="catalytic activity">
    <reaction evidence="1">
        <text>[[Fe-S] cluster scaffold protein carrying a second [4Fe-4S](2+) cluster] + N(6)-octanoyl-L-lysyl-[protein] + 2 oxidized [2Fe-2S]-[ferredoxin] + 2 S-adenosyl-L-methionine + 4 H(+) = [[Fe-S] cluster scaffold protein] + N(6)-[(R)-dihydrolipoyl]-L-lysyl-[protein] + 4 Fe(3+) + 2 hydrogen sulfide + 2 5'-deoxyadenosine + 2 L-methionine + 2 reduced [2Fe-2S]-[ferredoxin]</text>
        <dbReference type="Rhea" id="RHEA:16585"/>
        <dbReference type="Rhea" id="RHEA-COMP:9928"/>
        <dbReference type="Rhea" id="RHEA-COMP:10000"/>
        <dbReference type="Rhea" id="RHEA-COMP:10001"/>
        <dbReference type="Rhea" id="RHEA-COMP:10475"/>
        <dbReference type="Rhea" id="RHEA-COMP:14568"/>
        <dbReference type="Rhea" id="RHEA-COMP:14569"/>
        <dbReference type="ChEBI" id="CHEBI:15378"/>
        <dbReference type="ChEBI" id="CHEBI:17319"/>
        <dbReference type="ChEBI" id="CHEBI:29034"/>
        <dbReference type="ChEBI" id="CHEBI:29919"/>
        <dbReference type="ChEBI" id="CHEBI:33722"/>
        <dbReference type="ChEBI" id="CHEBI:33737"/>
        <dbReference type="ChEBI" id="CHEBI:33738"/>
        <dbReference type="ChEBI" id="CHEBI:57844"/>
        <dbReference type="ChEBI" id="CHEBI:59789"/>
        <dbReference type="ChEBI" id="CHEBI:78809"/>
        <dbReference type="ChEBI" id="CHEBI:83100"/>
        <dbReference type="EC" id="2.8.1.8"/>
    </reaction>
</comment>
<comment type="cofactor">
    <cofactor evidence="1">
        <name>[4Fe-4S] cluster</name>
        <dbReference type="ChEBI" id="CHEBI:49883"/>
    </cofactor>
    <text evidence="1">Binds 2 [4Fe-4S] clusters per subunit. One cluster is coordinated with 3 cysteines and an exchangeable S-adenosyl-L-methionine.</text>
</comment>
<comment type="pathway">
    <text evidence="1">Protein modification; protein lipoylation via endogenous pathway; protein N(6)-(lipoyl)lysine from octanoyl-[acyl-carrier-protein]: step 2/2.</text>
</comment>
<comment type="subcellular location">
    <subcellularLocation>
        <location evidence="1">Cytoplasm</location>
    </subcellularLocation>
</comment>
<comment type="similarity">
    <text evidence="1">Belongs to the radical SAM superfamily. Lipoyl synthase family.</text>
</comment>
<protein>
    <recommendedName>
        <fullName evidence="1">Lipoyl synthase</fullName>
        <ecNumber evidence="1">2.8.1.8</ecNumber>
    </recommendedName>
    <alternativeName>
        <fullName evidence="1">Lip-syn</fullName>
        <shortName evidence="1">LS</shortName>
    </alternativeName>
    <alternativeName>
        <fullName evidence="1">Lipoate synthase</fullName>
    </alternativeName>
    <alternativeName>
        <fullName evidence="1">Lipoic acid synthase</fullName>
    </alternativeName>
    <alternativeName>
        <fullName evidence="1">Sulfur insertion protein LipA</fullName>
    </alternativeName>
</protein>
<gene>
    <name evidence="1" type="primary">lipA</name>
    <name type="ordered locus">SAV_6009</name>
</gene>
<feature type="chain" id="PRO_0000102365" description="Lipoyl synthase">
    <location>
        <begin position="1"/>
        <end position="328"/>
    </location>
</feature>
<feature type="domain" description="Radical SAM core" evidence="2">
    <location>
        <begin position="68"/>
        <end position="287"/>
    </location>
</feature>
<feature type="binding site" evidence="1">
    <location>
        <position position="56"/>
    </location>
    <ligand>
        <name>[4Fe-4S] cluster</name>
        <dbReference type="ChEBI" id="CHEBI:49883"/>
        <label>1</label>
    </ligand>
</feature>
<feature type="binding site" evidence="1">
    <location>
        <position position="61"/>
    </location>
    <ligand>
        <name>[4Fe-4S] cluster</name>
        <dbReference type="ChEBI" id="CHEBI:49883"/>
        <label>1</label>
    </ligand>
</feature>
<feature type="binding site" evidence="1">
    <location>
        <position position="67"/>
    </location>
    <ligand>
        <name>[4Fe-4S] cluster</name>
        <dbReference type="ChEBI" id="CHEBI:49883"/>
        <label>1</label>
    </ligand>
</feature>
<feature type="binding site" evidence="1">
    <location>
        <position position="82"/>
    </location>
    <ligand>
        <name>[4Fe-4S] cluster</name>
        <dbReference type="ChEBI" id="CHEBI:49883"/>
        <label>2</label>
        <note>4Fe-4S-S-AdoMet</note>
    </ligand>
</feature>
<feature type="binding site" evidence="1">
    <location>
        <position position="86"/>
    </location>
    <ligand>
        <name>[4Fe-4S] cluster</name>
        <dbReference type="ChEBI" id="CHEBI:49883"/>
        <label>2</label>
        <note>4Fe-4S-S-AdoMet</note>
    </ligand>
</feature>
<feature type="binding site" evidence="1">
    <location>
        <position position="89"/>
    </location>
    <ligand>
        <name>[4Fe-4S] cluster</name>
        <dbReference type="ChEBI" id="CHEBI:49883"/>
        <label>2</label>
        <note>4Fe-4S-S-AdoMet</note>
    </ligand>
</feature>
<feature type="binding site" evidence="1">
    <location>
        <position position="298"/>
    </location>
    <ligand>
        <name>[4Fe-4S] cluster</name>
        <dbReference type="ChEBI" id="CHEBI:49883"/>
        <label>1</label>
    </ligand>
</feature>
<name>LIPA_STRAW</name>
<reference key="1">
    <citation type="journal article" date="2001" name="Proc. Natl. Acad. Sci. U.S.A.">
        <title>Genome sequence of an industrial microorganism Streptomyces avermitilis: deducing the ability of producing secondary metabolites.</title>
        <authorList>
            <person name="Omura S."/>
            <person name="Ikeda H."/>
            <person name="Ishikawa J."/>
            <person name="Hanamoto A."/>
            <person name="Takahashi C."/>
            <person name="Shinose M."/>
            <person name="Takahashi Y."/>
            <person name="Horikawa H."/>
            <person name="Nakazawa H."/>
            <person name="Osonoe T."/>
            <person name="Kikuchi H."/>
            <person name="Shiba T."/>
            <person name="Sakaki Y."/>
            <person name="Hattori M."/>
        </authorList>
    </citation>
    <scope>NUCLEOTIDE SEQUENCE [LARGE SCALE GENOMIC DNA]</scope>
    <source>
        <strain>ATCC 31267 / DSM 46492 / JCM 5070 / NBRC 14893 / NCIMB 12804 / NRRL 8165 / MA-4680</strain>
    </source>
</reference>
<reference key="2">
    <citation type="journal article" date="2003" name="Nat. Biotechnol.">
        <title>Complete genome sequence and comparative analysis of the industrial microorganism Streptomyces avermitilis.</title>
        <authorList>
            <person name="Ikeda H."/>
            <person name="Ishikawa J."/>
            <person name="Hanamoto A."/>
            <person name="Shinose M."/>
            <person name="Kikuchi H."/>
            <person name="Shiba T."/>
            <person name="Sakaki Y."/>
            <person name="Hattori M."/>
            <person name="Omura S."/>
        </authorList>
    </citation>
    <scope>NUCLEOTIDE SEQUENCE [LARGE SCALE GENOMIC DNA]</scope>
    <source>
        <strain>ATCC 31267 / DSM 46492 / JCM 5070 / NBRC 14893 / NCIMB 12804 / NRRL 8165 / MA-4680</strain>
    </source>
</reference>
<keyword id="KW-0004">4Fe-4S</keyword>
<keyword id="KW-0963">Cytoplasm</keyword>
<keyword id="KW-0408">Iron</keyword>
<keyword id="KW-0411">Iron-sulfur</keyword>
<keyword id="KW-0479">Metal-binding</keyword>
<keyword id="KW-1185">Reference proteome</keyword>
<keyword id="KW-0949">S-adenosyl-L-methionine</keyword>
<keyword id="KW-0808">Transferase</keyword>
<proteinExistence type="inferred from homology"/>
<sequence length="328" mass="36964">MSAVAPDGRKMLRLEVRNAQTPIERKPEWIKTRAKMGPEYTKMQNLVKSEGLHTVCQEAGCPNIYECWEDREATFLIGGDQCTRRCDFCQIDTGKPEALDRDEPRRVGESVVTMDLNYATITGVARDDLEDGGAWLYAETVRQIHAQTAGREAGRTKVELLAPDFNAEPDQLAEVFSARPEVFAHNVETVPRIFKRIRPGFRYERSLKVITEARDYGLVTKSNLILGMGETREEVSEALRQLHDAGCELITITQYLRPSVRHHPVERWVKPHEFVELKEEAEEIGFSGVMSGPLVRSSYRAGRLYQMAMELRQSAAPQGGAQVASQAV</sequence>